<accession>Q9UY36</accession>
<accession>G8ZK33</accession>
<keyword id="KW-0030">Aminoacyl-tRNA synthetase</keyword>
<keyword id="KW-0067">ATP-binding</keyword>
<keyword id="KW-0963">Cytoplasm</keyword>
<keyword id="KW-0436">Ligase</keyword>
<keyword id="KW-0479">Metal-binding</keyword>
<keyword id="KW-0547">Nucleotide-binding</keyword>
<keyword id="KW-0648">Protein biosynthesis</keyword>
<keyword id="KW-0694">RNA-binding</keyword>
<keyword id="KW-0820">tRNA-binding</keyword>
<keyword id="KW-0862">Zinc</keyword>
<protein>
    <recommendedName>
        <fullName evidence="1">Alanine--tRNA ligase</fullName>
        <ecNumber evidence="1">6.1.1.7</ecNumber>
    </recommendedName>
    <alternativeName>
        <fullName evidence="1">Alanyl-tRNA synthetase</fullName>
        <shortName evidence="1">AlaRS</shortName>
    </alternativeName>
</protein>
<name>SYA_PYRAB</name>
<feature type="chain" id="PRO_0000075271" description="Alanine--tRNA ligase">
    <location>
        <begin position="1"/>
        <end position="914"/>
    </location>
</feature>
<feature type="binding site" evidence="1">
    <location>
        <position position="613"/>
    </location>
    <ligand>
        <name>Zn(2+)</name>
        <dbReference type="ChEBI" id="CHEBI:29105"/>
    </ligand>
</feature>
<feature type="binding site" evidence="1">
    <location>
        <position position="617"/>
    </location>
    <ligand>
        <name>Zn(2+)</name>
        <dbReference type="ChEBI" id="CHEBI:29105"/>
    </ligand>
</feature>
<feature type="binding site" evidence="1">
    <location>
        <position position="717"/>
    </location>
    <ligand>
        <name>Zn(2+)</name>
        <dbReference type="ChEBI" id="CHEBI:29105"/>
    </ligand>
</feature>
<feature type="binding site" evidence="1">
    <location>
        <position position="721"/>
    </location>
    <ligand>
        <name>Zn(2+)</name>
        <dbReference type="ChEBI" id="CHEBI:29105"/>
    </ligand>
</feature>
<evidence type="ECO:0000255" key="1">
    <source>
        <dbReference type="HAMAP-Rule" id="MF_00036"/>
    </source>
</evidence>
<dbReference type="EC" id="6.1.1.7" evidence="1"/>
<dbReference type="EMBL" id="AJ248288">
    <property type="protein sequence ID" value="CAB50576.1"/>
    <property type="molecule type" value="Genomic_DNA"/>
</dbReference>
<dbReference type="EMBL" id="HE613800">
    <property type="protein sequence ID" value="CCE71140.1"/>
    <property type="molecule type" value="Genomic_DNA"/>
</dbReference>
<dbReference type="PIR" id="B75017">
    <property type="entry name" value="B75017"/>
</dbReference>
<dbReference type="RefSeq" id="WP_010868790.1">
    <property type="nucleotide sequence ID" value="NC_000868.1"/>
</dbReference>
<dbReference type="SMR" id="Q9UY36"/>
<dbReference type="STRING" id="272844.PAB1245"/>
<dbReference type="KEGG" id="pab:PAB1245"/>
<dbReference type="PATRIC" id="fig|272844.11.peg.1786"/>
<dbReference type="eggNOG" id="arCOG01255">
    <property type="taxonomic scope" value="Archaea"/>
</dbReference>
<dbReference type="HOGENOM" id="CLU_004485_4_0_2"/>
<dbReference type="OrthoDB" id="7506at2157"/>
<dbReference type="PhylomeDB" id="Q9UY36"/>
<dbReference type="Proteomes" id="UP000000810">
    <property type="component" value="Chromosome"/>
</dbReference>
<dbReference type="Proteomes" id="UP000009139">
    <property type="component" value="Chromosome"/>
</dbReference>
<dbReference type="GO" id="GO:0005737">
    <property type="term" value="C:cytoplasm"/>
    <property type="evidence" value="ECO:0007669"/>
    <property type="project" value="UniProtKB-SubCell"/>
</dbReference>
<dbReference type="GO" id="GO:0004813">
    <property type="term" value="F:alanine-tRNA ligase activity"/>
    <property type="evidence" value="ECO:0007669"/>
    <property type="project" value="UniProtKB-UniRule"/>
</dbReference>
<dbReference type="GO" id="GO:0002161">
    <property type="term" value="F:aminoacyl-tRNA deacylase activity"/>
    <property type="evidence" value="ECO:0007669"/>
    <property type="project" value="UniProtKB-ARBA"/>
</dbReference>
<dbReference type="GO" id="GO:0005524">
    <property type="term" value="F:ATP binding"/>
    <property type="evidence" value="ECO:0007669"/>
    <property type="project" value="UniProtKB-UniRule"/>
</dbReference>
<dbReference type="GO" id="GO:0000049">
    <property type="term" value="F:tRNA binding"/>
    <property type="evidence" value="ECO:0007669"/>
    <property type="project" value="UniProtKB-KW"/>
</dbReference>
<dbReference type="GO" id="GO:0008270">
    <property type="term" value="F:zinc ion binding"/>
    <property type="evidence" value="ECO:0007669"/>
    <property type="project" value="UniProtKB-UniRule"/>
</dbReference>
<dbReference type="GO" id="GO:0006419">
    <property type="term" value="P:alanyl-tRNA aminoacylation"/>
    <property type="evidence" value="ECO:0007669"/>
    <property type="project" value="UniProtKB-UniRule"/>
</dbReference>
<dbReference type="CDD" id="cd00673">
    <property type="entry name" value="AlaRS_core"/>
    <property type="match status" value="1"/>
</dbReference>
<dbReference type="FunFam" id="2.40.30.130:FF:000010">
    <property type="entry name" value="Alanine--tRNA ligase"/>
    <property type="match status" value="1"/>
</dbReference>
<dbReference type="FunFam" id="3.10.310.40:FF:000001">
    <property type="entry name" value="Alanine--tRNA ligase"/>
    <property type="match status" value="1"/>
</dbReference>
<dbReference type="FunFam" id="3.30.54.20:FF:000005">
    <property type="entry name" value="Alanine--tRNA ligase"/>
    <property type="match status" value="1"/>
</dbReference>
<dbReference type="FunFam" id="3.30.930.10:FF:000056">
    <property type="entry name" value="Alanine--tRNA ligase"/>
    <property type="match status" value="1"/>
</dbReference>
<dbReference type="FunFam" id="3.30.980.10:FF:000004">
    <property type="entry name" value="Alanine--tRNA ligase, cytoplasmic"/>
    <property type="match status" value="1"/>
</dbReference>
<dbReference type="Gene3D" id="2.40.30.130">
    <property type="match status" value="1"/>
</dbReference>
<dbReference type="Gene3D" id="3.10.310.40">
    <property type="match status" value="1"/>
</dbReference>
<dbReference type="Gene3D" id="3.30.54.20">
    <property type="match status" value="1"/>
</dbReference>
<dbReference type="Gene3D" id="6.10.250.550">
    <property type="match status" value="1"/>
</dbReference>
<dbReference type="Gene3D" id="3.30.930.10">
    <property type="entry name" value="Bira Bifunctional Protein, Domain 2"/>
    <property type="match status" value="1"/>
</dbReference>
<dbReference type="Gene3D" id="3.30.980.10">
    <property type="entry name" value="Threonyl-trna Synthetase, Chain A, domain 2"/>
    <property type="match status" value="1"/>
</dbReference>
<dbReference type="HAMAP" id="MF_00036_A">
    <property type="entry name" value="Ala_tRNA_synth_A"/>
    <property type="match status" value="1"/>
</dbReference>
<dbReference type="InterPro" id="IPR045864">
    <property type="entry name" value="aa-tRNA-synth_II/BPL/LPL"/>
</dbReference>
<dbReference type="InterPro" id="IPR002318">
    <property type="entry name" value="Ala-tRNA-lgiase_IIc"/>
</dbReference>
<dbReference type="InterPro" id="IPR018162">
    <property type="entry name" value="Ala-tRNA-ligase_IIc_anticod-bd"/>
</dbReference>
<dbReference type="InterPro" id="IPR018165">
    <property type="entry name" value="Ala-tRNA-synth_IIc_core"/>
</dbReference>
<dbReference type="InterPro" id="IPR018164">
    <property type="entry name" value="Ala-tRNA-synth_IIc_N"/>
</dbReference>
<dbReference type="InterPro" id="IPR022429">
    <property type="entry name" value="Ala-tRNA_lgiase_arc"/>
</dbReference>
<dbReference type="InterPro" id="IPR050058">
    <property type="entry name" value="Ala-tRNA_ligase"/>
</dbReference>
<dbReference type="InterPro" id="IPR003156">
    <property type="entry name" value="DHHA1_dom"/>
</dbReference>
<dbReference type="InterPro" id="IPR018163">
    <property type="entry name" value="Thr/Ala-tRNA-synth_IIc_edit"/>
</dbReference>
<dbReference type="InterPro" id="IPR009000">
    <property type="entry name" value="Transl_B-barrel_sf"/>
</dbReference>
<dbReference type="InterPro" id="IPR012947">
    <property type="entry name" value="tRNA_SAD"/>
</dbReference>
<dbReference type="NCBIfam" id="TIGR03683">
    <property type="entry name" value="A-tRNA_syn_arch"/>
    <property type="match status" value="1"/>
</dbReference>
<dbReference type="NCBIfam" id="TIGR00344">
    <property type="entry name" value="alaS"/>
    <property type="match status" value="1"/>
</dbReference>
<dbReference type="PANTHER" id="PTHR11777:SF9">
    <property type="entry name" value="ALANINE--TRNA LIGASE, CYTOPLASMIC"/>
    <property type="match status" value="1"/>
</dbReference>
<dbReference type="PANTHER" id="PTHR11777">
    <property type="entry name" value="ALANYL-TRNA SYNTHETASE"/>
    <property type="match status" value="1"/>
</dbReference>
<dbReference type="Pfam" id="PF02272">
    <property type="entry name" value="DHHA1"/>
    <property type="match status" value="1"/>
</dbReference>
<dbReference type="Pfam" id="PF01411">
    <property type="entry name" value="tRNA-synt_2c"/>
    <property type="match status" value="1"/>
</dbReference>
<dbReference type="Pfam" id="PF07973">
    <property type="entry name" value="tRNA_SAD"/>
    <property type="match status" value="1"/>
</dbReference>
<dbReference type="PRINTS" id="PR00980">
    <property type="entry name" value="TRNASYNTHALA"/>
</dbReference>
<dbReference type="SMART" id="SM00863">
    <property type="entry name" value="tRNA_SAD"/>
    <property type="match status" value="1"/>
</dbReference>
<dbReference type="SUPFAM" id="SSF55681">
    <property type="entry name" value="Class II aaRS and biotin synthetases"/>
    <property type="match status" value="1"/>
</dbReference>
<dbReference type="SUPFAM" id="SSF101353">
    <property type="entry name" value="Putative anticodon-binding domain of alanyl-tRNA synthetase (AlaRS)"/>
    <property type="match status" value="1"/>
</dbReference>
<dbReference type="SUPFAM" id="SSF55186">
    <property type="entry name" value="ThrRS/AlaRS common domain"/>
    <property type="match status" value="1"/>
</dbReference>
<dbReference type="SUPFAM" id="SSF50447">
    <property type="entry name" value="Translation proteins"/>
    <property type="match status" value="1"/>
</dbReference>
<dbReference type="PROSITE" id="PS50860">
    <property type="entry name" value="AA_TRNA_LIGASE_II_ALA"/>
    <property type="match status" value="1"/>
</dbReference>
<gene>
    <name evidence="1" type="primary">alaS</name>
    <name type="ordered locus">PYRAB16720</name>
    <name type="ORF">PAB1245</name>
</gene>
<sequence>MEFIMKTRMFEEEGWIRKKCKVCGKPFWTLDPDRETCGDPPCDEYQFIGKPGIPKKYTLDEMREKFLKFFEKHEVYPHGRVKRYPVLPRWRDDVLLVGASIMDFQPWVISGEADPPANPLVISQPSIRFTDIDNVGITGRHFTIFEMMAHHAFNYPGKPIYWIDETVELAFEFFTKELKMKPEDITFKENPWAGGGNAGPAFEVLYRGLEVATLVFMQYKKAPENAPEDQVVIIKGDRYVPMETKVVDTGYGLERLVWMSQGTPTAYDAVLGYVVEPLKRMAGVEKIDERILMENSRLAGMFDIEDMGDLKLLRKKVAEKVGISVEELEKAIRPYELIYAIADHTKALTFMLADGVIPSNVKAGYLARLLIRKSIRHLKELGLEVPLSEIVALHIKELHKTFPEFKEMEDVILEIIDLEEKKYSETLKRGSDLVRREIAKLKKKGMSEIPLEKLITFYESHGLTPELVKEIAEKEGIKVHVPDNFYSIVAKEAEKEKEEKEEEVVDFELVKDLPETRTLYYEDPFMKEFEARVLRVIGDWIVLDQTAFYPEGGGQPYDTGVLFVNGSEVKVTNVQKVGKVIVHKVENPGLFKEGMEVRGRIDWDRRIQHMRHHTGTHVLMGALVRVLGKHVWQAGSQLTTDWARLDISHYKRISDEELREIERLANRIVMEDRKVTWEWLPRTEAEQRYGFRLYQGGVVPGRVIRVVKIEDWDVQACGGTHLPSTGLVGPIKILRTERIQDGVERIIFACGEAAIKEWQKEREILKKASQVLRVPPEKLPETAERFFNEWKEARKEVEKLKKELAKLLVYELEAKVQKVKEYEFIGEIVEGSMDDLREAVERLKKPNRIVVLVSKEGYFAISVGDNVNLNANDLAKKLTSIAGGGGGGRKDVAQGRIKDVSKAKEAIESIVKLL</sequence>
<proteinExistence type="inferred from homology"/>
<reference key="1">
    <citation type="journal article" date="2003" name="Mol. Microbiol.">
        <title>An integrated analysis of the genome of the hyperthermophilic archaeon Pyrococcus abyssi.</title>
        <authorList>
            <person name="Cohen G.N."/>
            <person name="Barbe V."/>
            <person name="Flament D."/>
            <person name="Galperin M."/>
            <person name="Heilig R."/>
            <person name="Lecompte O."/>
            <person name="Poch O."/>
            <person name="Prieur D."/>
            <person name="Querellou J."/>
            <person name="Ripp R."/>
            <person name="Thierry J.-C."/>
            <person name="Van der Oost J."/>
            <person name="Weissenbach J."/>
            <person name="Zivanovic Y."/>
            <person name="Forterre P."/>
        </authorList>
    </citation>
    <scope>NUCLEOTIDE SEQUENCE [LARGE SCALE GENOMIC DNA]</scope>
    <source>
        <strain>GE5 / Orsay</strain>
    </source>
</reference>
<reference key="2">
    <citation type="journal article" date="2012" name="Curr. Microbiol.">
        <title>Re-annotation of two hyperthermophilic archaea Pyrococcus abyssi GE5 and Pyrococcus furiosus DSM 3638.</title>
        <authorList>
            <person name="Gao J."/>
            <person name="Wang J."/>
        </authorList>
    </citation>
    <scope>GENOME REANNOTATION</scope>
    <source>
        <strain>GE5 / Orsay</strain>
    </source>
</reference>
<comment type="function">
    <text evidence="1">Catalyzes the attachment of alanine to tRNA(Ala) in a two-step reaction: alanine is first activated by ATP to form Ala-AMP and then transferred to the acceptor end of tRNA(Ala). Also edits incorrectly charged Ser-tRNA(Ala) and Gly-tRNA(Ala) via its editing domain.</text>
</comment>
<comment type="catalytic activity">
    <reaction evidence="1">
        <text>tRNA(Ala) + L-alanine + ATP = L-alanyl-tRNA(Ala) + AMP + diphosphate</text>
        <dbReference type="Rhea" id="RHEA:12540"/>
        <dbReference type="Rhea" id="RHEA-COMP:9657"/>
        <dbReference type="Rhea" id="RHEA-COMP:9923"/>
        <dbReference type="ChEBI" id="CHEBI:30616"/>
        <dbReference type="ChEBI" id="CHEBI:33019"/>
        <dbReference type="ChEBI" id="CHEBI:57972"/>
        <dbReference type="ChEBI" id="CHEBI:78442"/>
        <dbReference type="ChEBI" id="CHEBI:78497"/>
        <dbReference type="ChEBI" id="CHEBI:456215"/>
        <dbReference type="EC" id="6.1.1.7"/>
    </reaction>
</comment>
<comment type="cofactor">
    <cofactor evidence="1">
        <name>Zn(2+)</name>
        <dbReference type="ChEBI" id="CHEBI:29105"/>
    </cofactor>
    <text evidence="1">Binds 1 zinc ion per subunit.</text>
</comment>
<comment type="subcellular location">
    <subcellularLocation>
        <location evidence="1">Cytoplasm</location>
    </subcellularLocation>
</comment>
<comment type="domain">
    <text evidence="1">Consists of three domains; the N-terminal catalytic domain, the editing domain and the C-terminal C-Ala domain. The editing domain removes incorrectly charged amino acids, while the C-Ala domain, along with tRNA(Ala), serves as a bridge to cooperatively bring together the editing and aminoacylation centers thus stimulating deacylation of misacylated tRNAs.</text>
</comment>
<comment type="similarity">
    <text evidence="1">Belongs to the class-II aminoacyl-tRNA synthetase family.</text>
</comment>
<organism>
    <name type="scientific">Pyrococcus abyssi (strain GE5 / Orsay)</name>
    <dbReference type="NCBI Taxonomy" id="272844"/>
    <lineage>
        <taxon>Archaea</taxon>
        <taxon>Methanobacteriati</taxon>
        <taxon>Methanobacteriota</taxon>
        <taxon>Thermococci</taxon>
        <taxon>Thermococcales</taxon>
        <taxon>Thermococcaceae</taxon>
        <taxon>Pyrococcus</taxon>
    </lineage>
</organism>